<dbReference type="EMBL" id="DQ017831">
    <property type="protein sequence ID" value="AAY41281.1"/>
    <property type="molecule type" value="mRNA"/>
</dbReference>
<dbReference type="SMR" id="Q4U313"/>
<dbReference type="GlyCosmos" id="Q4U313">
    <property type="glycosylation" value="1 site, No reported glycans"/>
</dbReference>
<dbReference type="GO" id="GO:0005615">
    <property type="term" value="C:extracellular space"/>
    <property type="evidence" value="ECO:0007669"/>
    <property type="project" value="UniProtKB-KW"/>
</dbReference>
<dbReference type="GO" id="GO:0005125">
    <property type="term" value="F:cytokine activity"/>
    <property type="evidence" value="ECO:0007669"/>
    <property type="project" value="UniProtKB-KW"/>
</dbReference>
<dbReference type="GO" id="GO:0008083">
    <property type="term" value="F:growth factor activity"/>
    <property type="evidence" value="ECO:0007669"/>
    <property type="project" value="UniProtKB-KW"/>
</dbReference>
<dbReference type="GO" id="GO:0005134">
    <property type="term" value="F:interleukin-2 receptor binding"/>
    <property type="evidence" value="ECO:0007669"/>
    <property type="project" value="InterPro"/>
</dbReference>
<dbReference type="GO" id="GO:0002250">
    <property type="term" value="P:adaptive immune response"/>
    <property type="evidence" value="ECO:0007669"/>
    <property type="project" value="UniProtKB-KW"/>
</dbReference>
<dbReference type="GO" id="GO:0009891">
    <property type="term" value="P:positive regulation of biosynthetic process"/>
    <property type="evidence" value="ECO:0007669"/>
    <property type="project" value="UniProtKB-ARBA"/>
</dbReference>
<dbReference type="Gene3D" id="1.20.1250.10">
    <property type="match status" value="1"/>
</dbReference>
<dbReference type="InterPro" id="IPR009079">
    <property type="entry name" value="4_helix_cytokine-like_core"/>
</dbReference>
<dbReference type="InterPro" id="IPR000779">
    <property type="entry name" value="IL-2"/>
</dbReference>
<dbReference type="InterPro" id="IPR030477">
    <property type="entry name" value="IL-2_CS"/>
</dbReference>
<dbReference type="PANTHER" id="PTHR48487">
    <property type="entry name" value="INTERLEUKIN-2"/>
    <property type="match status" value="1"/>
</dbReference>
<dbReference type="PANTHER" id="PTHR48487:SF1">
    <property type="entry name" value="INTERLEUKIN-2"/>
    <property type="match status" value="1"/>
</dbReference>
<dbReference type="Pfam" id="PF00715">
    <property type="entry name" value="IL2"/>
    <property type="match status" value="1"/>
</dbReference>
<dbReference type="PRINTS" id="PR00265">
    <property type="entry name" value="INTERLEUKIN2"/>
</dbReference>
<dbReference type="SMART" id="SM00189">
    <property type="entry name" value="IL2"/>
    <property type="match status" value="1"/>
</dbReference>
<dbReference type="SUPFAM" id="SSF47266">
    <property type="entry name" value="4-helical cytokines"/>
    <property type="match status" value="1"/>
</dbReference>
<dbReference type="PROSITE" id="PS00424">
    <property type="entry name" value="INTERLEUKIN_2"/>
    <property type="match status" value="1"/>
</dbReference>
<organism>
    <name type="scientific">Boselaphus tragocamelus</name>
    <name type="common">Nilgai</name>
    <dbReference type="NCBI Taxonomy" id="9917"/>
    <lineage>
        <taxon>Eukaryota</taxon>
        <taxon>Metazoa</taxon>
        <taxon>Chordata</taxon>
        <taxon>Craniata</taxon>
        <taxon>Vertebrata</taxon>
        <taxon>Euteleostomi</taxon>
        <taxon>Mammalia</taxon>
        <taxon>Eutheria</taxon>
        <taxon>Laurasiatheria</taxon>
        <taxon>Artiodactyla</taxon>
        <taxon>Ruminantia</taxon>
        <taxon>Pecora</taxon>
        <taxon>Bovidae</taxon>
        <taxon>Bovinae</taxon>
        <taxon>Boselaphus</taxon>
    </lineage>
</organism>
<gene>
    <name type="primary">IL2</name>
</gene>
<evidence type="ECO:0000250" key="1"/>
<evidence type="ECO:0000250" key="2">
    <source>
        <dbReference type="UniProtKB" id="P60568"/>
    </source>
</evidence>
<evidence type="ECO:0000305" key="3"/>
<name>IL2_BOSTR</name>
<proteinExistence type="evidence at transcript level"/>
<accession>Q4U313</accession>
<feature type="signal peptide" evidence="1">
    <location>
        <begin position="1"/>
        <end position="20"/>
    </location>
</feature>
<feature type="chain" id="PRO_0000253501" description="Interleukin-2">
    <location>
        <begin position="21"/>
        <end position="155"/>
    </location>
</feature>
<feature type="glycosylation site" description="O-linked (GalNAc...) threonine" evidence="1">
    <location>
        <position position="23"/>
    </location>
</feature>
<feature type="disulfide bond" evidence="1">
    <location>
        <begin position="79"/>
        <end position="127"/>
    </location>
</feature>
<reference key="1">
    <citation type="submission" date="2005-04" db="EMBL/GenBank/DDBJ databases">
        <title>Nucleotide and amino acid sequence comparison of Boselaphus tragocamelus IL-2 with other ruminants.</title>
        <authorList>
            <person name="Saini M."/>
            <person name="Das D.K."/>
            <person name="Swarup D."/>
            <person name="Yadav M.P."/>
            <person name="Gupta P.K."/>
        </authorList>
    </citation>
    <scope>NUCLEOTIDE SEQUENCE [MRNA]</scope>
</reference>
<keyword id="KW-1064">Adaptive immunity</keyword>
<keyword id="KW-0202">Cytokine</keyword>
<keyword id="KW-1015">Disulfide bond</keyword>
<keyword id="KW-0325">Glycoprotein</keyword>
<keyword id="KW-0339">Growth factor</keyword>
<keyword id="KW-0391">Immunity</keyword>
<keyword id="KW-0964">Secreted</keyword>
<keyword id="KW-0732">Signal</keyword>
<comment type="function">
    <text evidence="2">Cytokine produced by activated CD4-positive helper T-cells and to a lesser extend activated CD8-positive T-cells and natural killer (NK) cells that plays pivotal roles in the immune response and tolerance. Binds to a receptor complex composed of either the high-affinity trimeric IL-2R (IL2RA/CD25, IL2RB/CD122 and IL2RG/CD132) or the low-affinity dimeric IL-2R (IL2RB and IL2RG). Interaction with the receptor leads to oligomerization and conformation changes in the IL-2R subunits resulting in downstream signaling starting with phosphorylation of JAK1 and JAK3. In turn, JAK1 and JAK3 phosphorylate the receptor to form a docking site leading to the phosphorylation of several substrates including STAT5. This process leads to activation of several pathways including STAT, phosphoinositide-3-kinase/PI3K and mitogen-activated protein kinase/MAPK pathways. Functions as a T-cell growth factor and can increase NK-cell cytolytic activity as well. Promotes strong proliferation of activated B-cells and subsequently immunoglobulin production. Plays a pivotal role in regulating the adaptive immune system by controlling the survival and proliferation of regulatory T-cells, which are required for the maintenance of immune tolerance. Moreover, participates in the differentiation and homeostasis of effector T-cell subsets, including Th1, Th2, Th17 as well as memory CD8-positive T-cells.</text>
</comment>
<comment type="subcellular location">
    <subcellularLocation>
        <location evidence="1">Secreted</location>
    </subcellularLocation>
</comment>
<comment type="similarity">
    <text evidence="3">Belongs to the IL-2 family.</text>
</comment>
<sequence>MYKIQLLSCIALTLALVANGAPTSSSTGNTMKEVKSLLLDLQLLLEKVKNPENLKHSRMHTFNFYVPKVNATELKHLKCLLEELKLLEEVLNLAPSKNLNPREIKDSMDNIKRIVLELQGSETRFTCEYDDVTVKAVEFLNKWITFCQSIYSTMT</sequence>
<protein>
    <recommendedName>
        <fullName>Interleukin-2</fullName>
        <shortName>IL-2</shortName>
    </recommendedName>
    <alternativeName>
        <fullName>T-cell growth factor</fullName>
        <shortName>TCGF</shortName>
    </alternativeName>
</protein>